<dbReference type="EC" id="4.2.1.20" evidence="1"/>
<dbReference type="EMBL" id="CP000680">
    <property type="protein sequence ID" value="ABP82844.1"/>
    <property type="molecule type" value="Genomic_DNA"/>
</dbReference>
<dbReference type="SMR" id="A4XNC8"/>
<dbReference type="STRING" id="399739.Pmen_0070"/>
<dbReference type="KEGG" id="pmy:Pmen_0070"/>
<dbReference type="PATRIC" id="fig|399739.8.peg.69"/>
<dbReference type="eggNOG" id="COG0159">
    <property type="taxonomic scope" value="Bacteria"/>
</dbReference>
<dbReference type="HOGENOM" id="CLU_016734_0_4_6"/>
<dbReference type="OrthoDB" id="9804578at2"/>
<dbReference type="UniPathway" id="UPA00035">
    <property type="reaction ID" value="UER00044"/>
</dbReference>
<dbReference type="GO" id="GO:0005829">
    <property type="term" value="C:cytosol"/>
    <property type="evidence" value="ECO:0007669"/>
    <property type="project" value="TreeGrafter"/>
</dbReference>
<dbReference type="GO" id="GO:0004834">
    <property type="term" value="F:tryptophan synthase activity"/>
    <property type="evidence" value="ECO:0007669"/>
    <property type="project" value="UniProtKB-UniRule"/>
</dbReference>
<dbReference type="CDD" id="cd04724">
    <property type="entry name" value="Tryptophan_synthase_alpha"/>
    <property type="match status" value="1"/>
</dbReference>
<dbReference type="FunFam" id="3.20.20.70:FF:000037">
    <property type="entry name" value="Tryptophan synthase alpha chain"/>
    <property type="match status" value="1"/>
</dbReference>
<dbReference type="Gene3D" id="3.20.20.70">
    <property type="entry name" value="Aldolase class I"/>
    <property type="match status" value="1"/>
</dbReference>
<dbReference type="HAMAP" id="MF_00131">
    <property type="entry name" value="Trp_synth_alpha"/>
    <property type="match status" value="1"/>
</dbReference>
<dbReference type="InterPro" id="IPR013785">
    <property type="entry name" value="Aldolase_TIM"/>
</dbReference>
<dbReference type="InterPro" id="IPR011060">
    <property type="entry name" value="RibuloseP-bd_barrel"/>
</dbReference>
<dbReference type="InterPro" id="IPR018204">
    <property type="entry name" value="Trp_synthase_alpha_AS"/>
</dbReference>
<dbReference type="InterPro" id="IPR002028">
    <property type="entry name" value="Trp_synthase_suA"/>
</dbReference>
<dbReference type="NCBIfam" id="TIGR00262">
    <property type="entry name" value="trpA"/>
    <property type="match status" value="1"/>
</dbReference>
<dbReference type="PANTHER" id="PTHR43406:SF1">
    <property type="entry name" value="TRYPTOPHAN SYNTHASE ALPHA CHAIN, CHLOROPLASTIC"/>
    <property type="match status" value="1"/>
</dbReference>
<dbReference type="PANTHER" id="PTHR43406">
    <property type="entry name" value="TRYPTOPHAN SYNTHASE, ALPHA CHAIN"/>
    <property type="match status" value="1"/>
</dbReference>
<dbReference type="Pfam" id="PF00290">
    <property type="entry name" value="Trp_syntA"/>
    <property type="match status" value="1"/>
</dbReference>
<dbReference type="SUPFAM" id="SSF51366">
    <property type="entry name" value="Ribulose-phoshate binding barrel"/>
    <property type="match status" value="1"/>
</dbReference>
<dbReference type="PROSITE" id="PS00167">
    <property type="entry name" value="TRP_SYNTHASE_ALPHA"/>
    <property type="match status" value="1"/>
</dbReference>
<proteinExistence type="inferred from homology"/>
<protein>
    <recommendedName>
        <fullName evidence="1">Tryptophan synthase alpha chain</fullName>
        <ecNumber evidence="1">4.2.1.20</ecNumber>
    </recommendedName>
</protein>
<accession>A4XNC8</accession>
<feature type="chain" id="PRO_1000018256" description="Tryptophan synthase alpha chain">
    <location>
        <begin position="1"/>
        <end position="269"/>
    </location>
</feature>
<feature type="active site" description="Proton acceptor" evidence="1">
    <location>
        <position position="49"/>
    </location>
</feature>
<feature type="active site" description="Proton acceptor" evidence="1">
    <location>
        <position position="60"/>
    </location>
</feature>
<evidence type="ECO:0000255" key="1">
    <source>
        <dbReference type="HAMAP-Rule" id="MF_00131"/>
    </source>
</evidence>
<name>TRPA_ECTM1</name>
<keyword id="KW-0028">Amino-acid biosynthesis</keyword>
<keyword id="KW-0057">Aromatic amino acid biosynthesis</keyword>
<keyword id="KW-0456">Lyase</keyword>
<keyword id="KW-0822">Tryptophan biosynthesis</keyword>
<sequence>MSRLQNRFAELKAENRAALVTFVTAGDPDYATSLSILKGLPEAGADVIELGMPFTDPMADGPAIQLANIRALAGKQGMQQTLQMVREFRAGNQSTPLVLMGYYNPIFVYGVERFISDAKEAGVDGLIVVDLPPEHNDELCEPAQSAGLDFIRLTTPTTDDDRLPTVLAGSSGFVYYVSVAGVTGAGAATLDHVEEAVARLRRHTDLPVCIGFGIRTPEHAAEVAKRAEGAVVGSALIDKIAEAKSPQQAIDGVLGLCRELAEGVRGARR</sequence>
<comment type="function">
    <text evidence="1">The alpha subunit is responsible for the aldol cleavage of indoleglycerol phosphate to indole and glyceraldehyde 3-phosphate.</text>
</comment>
<comment type="catalytic activity">
    <reaction evidence="1">
        <text>(1S,2R)-1-C-(indol-3-yl)glycerol 3-phosphate + L-serine = D-glyceraldehyde 3-phosphate + L-tryptophan + H2O</text>
        <dbReference type="Rhea" id="RHEA:10532"/>
        <dbReference type="ChEBI" id="CHEBI:15377"/>
        <dbReference type="ChEBI" id="CHEBI:33384"/>
        <dbReference type="ChEBI" id="CHEBI:57912"/>
        <dbReference type="ChEBI" id="CHEBI:58866"/>
        <dbReference type="ChEBI" id="CHEBI:59776"/>
        <dbReference type="EC" id="4.2.1.20"/>
    </reaction>
</comment>
<comment type="pathway">
    <text evidence="1">Amino-acid biosynthesis; L-tryptophan biosynthesis; L-tryptophan from chorismate: step 5/5.</text>
</comment>
<comment type="subunit">
    <text evidence="1">Tetramer of two alpha and two beta chains.</text>
</comment>
<comment type="similarity">
    <text evidence="1">Belongs to the TrpA family.</text>
</comment>
<gene>
    <name evidence="1" type="primary">trpA</name>
    <name type="ordered locus">Pmen_0070</name>
</gene>
<organism>
    <name type="scientific">Ectopseudomonas mendocina (strain ymp)</name>
    <name type="common">Pseudomonas mendocina</name>
    <dbReference type="NCBI Taxonomy" id="399739"/>
    <lineage>
        <taxon>Bacteria</taxon>
        <taxon>Pseudomonadati</taxon>
        <taxon>Pseudomonadota</taxon>
        <taxon>Gammaproteobacteria</taxon>
        <taxon>Pseudomonadales</taxon>
        <taxon>Pseudomonadaceae</taxon>
        <taxon>Ectopseudomonas</taxon>
    </lineage>
</organism>
<reference key="1">
    <citation type="submission" date="2007-04" db="EMBL/GenBank/DDBJ databases">
        <title>Complete sequence of Pseudomonas mendocina ymp.</title>
        <authorList>
            <consortium name="US DOE Joint Genome Institute"/>
            <person name="Copeland A."/>
            <person name="Lucas S."/>
            <person name="Lapidus A."/>
            <person name="Barry K."/>
            <person name="Glavina del Rio T."/>
            <person name="Dalin E."/>
            <person name="Tice H."/>
            <person name="Pitluck S."/>
            <person name="Kiss H."/>
            <person name="Brettin T."/>
            <person name="Detter J.C."/>
            <person name="Bruce D."/>
            <person name="Han C."/>
            <person name="Schmutz J."/>
            <person name="Larimer F."/>
            <person name="Land M."/>
            <person name="Hauser L."/>
            <person name="Kyrpides N."/>
            <person name="Mikhailova N."/>
            <person name="Hersman L."/>
            <person name="Dubois J."/>
            <person name="Maurice P."/>
            <person name="Richardson P."/>
        </authorList>
    </citation>
    <scope>NUCLEOTIDE SEQUENCE [LARGE SCALE GENOMIC DNA]</scope>
    <source>
        <strain>ymp</strain>
    </source>
</reference>